<reference key="1">
    <citation type="submission" date="2008-06" db="EMBL/GenBank/DDBJ databases">
        <title>Complete sequence of Chlorobium phaeobacteroides BS1.</title>
        <authorList>
            <consortium name="US DOE Joint Genome Institute"/>
            <person name="Lucas S."/>
            <person name="Copeland A."/>
            <person name="Lapidus A."/>
            <person name="Glavina del Rio T."/>
            <person name="Dalin E."/>
            <person name="Tice H."/>
            <person name="Bruce D."/>
            <person name="Goodwin L."/>
            <person name="Pitluck S."/>
            <person name="Schmutz J."/>
            <person name="Larimer F."/>
            <person name="Land M."/>
            <person name="Hauser L."/>
            <person name="Kyrpides N."/>
            <person name="Ovchinnikova G."/>
            <person name="Li T."/>
            <person name="Liu Z."/>
            <person name="Zhao F."/>
            <person name="Overmann J."/>
            <person name="Bryant D.A."/>
            <person name="Richardson P."/>
        </authorList>
    </citation>
    <scope>NUCLEOTIDE SEQUENCE [LARGE SCALE GENOMIC DNA]</scope>
    <source>
        <strain>BS1</strain>
    </source>
</reference>
<evidence type="ECO:0000255" key="1">
    <source>
        <dbReference type="HAMAP-Rule" id="MF_01315"/>
    </source>
</evidence>
<evidence type="ECO:0000256" key="2">
    <source>
        <dbReference type="SAM" id="MobiDB-lite"/>
    </source>
</evidence>
<evidence type="ECO:0000305" key="3"/>
<feature type="chain" id="PRO_1000141238" description="Small ribosomal subunit protein uS13">
    <location>
        <begin position="1"/>
        <end position="125"/>
    </location>
</feature>
<feature type="region of interest" description="Disordered" evidence="2">
    <location>
        <begin position="92"/>
        <end position="125"/>
    </location>
</feature>
<feature type="compositionally biased region" description="Basic residues" evidence="2">
    <location>
        <begin position="107"/>
        <end position="125"/>
    </location>
</feature>
<comment type="function">
    <text evidence="1">Located at the top of the head of the 30S subunit, it contacts several helices of the 16S rRNA. In the 70S ribosome it contacts the 23S rRNA (bridge B1a) and protein L5 of the 50S subunit (bridge B1b), connecting the 2 subunits; these bridges are implicated in subunit movement. Contacts the tRNAs in the A and P-sites.</text>
</comment>
<comment type="subunit">
    <text evidence="1">Part of the 30S ribosomal subunit. Forms a loose heterodimer with protein S19. Forms two bridges to the 50S subunit in the 70S ribosome.</text>
</comment>
<comment type="similarity">
    <text evidence="1">Belongs to the universal ribosomal protein uS13 family.</text>
</comment>
<sequence>MRIAGVNLPLNKHAVIALTHIYGIGKTSAKNILERVGIDPARKISELNDEEAHSIREVIAEDYIVEGQARGEQQLSVKRLMDIGCYRGLRHRRSLPARGQNTQTNARTRKGRRKTVAGKKKAVKK</sequence>
<gene>
    <name evidence="1" type="primary">rpsM</name>
    <name type="ordered locus">Cphamn1_2272</name>
</gene>
<dbReference type="EMBL" id="CP001101">
    <property type="protein sequence ID" value="ACE05176.1"/>
    <property type="molecule type" value="Genomic_DNA"/>
</dbReference>
<dbReference type="SMR" id="B3EP37"/>
<dbReference type="STRING" id="331678.Cphamn1_2272"/>
<dbReference type="KEGG" id="cpb:Cphamn1_2272"/>
<dbReference type="eggNOG" id="COG0099">
    <property type="taxonomic scope" value="Bacteria"/>
</dbReference>
<dbReference type="HOGENOM" id="CLU_103849_1_2_10"/>
<dbReference type="OrthoDB" id="9803610at2"/>
<dbReference type="GO" id="GO:0005829">
    <property type="term" value="C:cytosol"/>
    <property type="evidence" value="ECO:0007669"/>
    <property type="project" value="TreeGrafter"/>
</dbReference>
<dbReference type="GO" id="GO:0015935">
    <property type="term" value="C:small ribosomal subunit"/>
    <property type="evidence" value="ECO:0007669"/>
    <property type="project" value="TreeGrafter"/>
</dbReference>
<dbReference type="GO" id="GO:0019843">
    <property type="term" value="F:rRNA binding"/>
    <property type="evidence" value="ECO:0007669"/>
    <property type="project" value="UniProtKB-UniRule"/>
</dbReference>
<dbReference type="GO" id="GO:0003735">
    <property type="term" value="F:structural constituent of ribosome"/>
    <property type="evidence" value="ECO:0007669"/>
    <property type="project" value="InterPro"/>
</dbReference>
<dbReference type="GO" id="GO:0000049">
    <property type="term" value="F:tRNA binding"/>
    <property type="evidence" value="ECO:0007669"/>
    <property type="project" value="UniProtKB-UniRule"/>
</dbReference>
<dbReference type="GO" id="GO:0006412">
    <property type="term" value="P:translation"/>
    <property type="evidence" value="ECO:0007669"/>
    <property type="project" value="UniProtKB-UniRule"/>
</dbReference>
<dbReference type="FunFam" id="1.10.8.50:FF:000001">
    <property type="entry name" value="30S ribosomal protein S13"/>
    <property type="match status" value="1"/>
</dbReference>
<dbReference type="FunFam" id="4.10.910.10:FF:000001">
    <property type="entry name" value="30S ribosomal protein S13"/>
    <property type="match status" value="1"/>
</dbReference>
<dbReference type="Gene3D" id="1.10.8.50">
    <property type="match status" value="1"/>
</dbReference>
<dbReference type="Gene3D" id="4.10.910.10">
    <property type="entry name" value="30s ribosomal protein s13, domain 2"/>
    <property type="match status" value="1"/>
</dbReference>
<dbReference type="HAMAP" id="MF_01315">
    <property type="entry name" value="Ribosomal_uS13"/>
    <property type="match status" value="1"/>
</dbReference>
<dbReference type="InterPro" id="IPR027437">
    <property type="entry name" value="Rbsml_uS13_C"/>
</dbReference>
<dbReference type="InterPro" id="IPR001892">
    <property type="entry name" value="Ribosomal_uS13"/>
</dbReference>
<dbReference type="InterPro" id="IPR010979">
    <property type="entry name" value="Ribosomal_uS13-like_H2TH"/>
</dbReference>
<dbReference type="InterPro" id="IPR019980">
    <property type="entry name" value="Ribosomal_uS13_bac-type"/>
</dbReference>
<dbReference type="NCBIfam" id="TIGR03631">
    <property type="entry name" value="uS13_bact"/>
    <property type="match status" value="1"/>
</dbReference>
<dbReference type="PANTHER" id="PTHR10871">
    <property type="entry name" value="30S RIBOSOMAL PROTEIN S13/40S RIBOSOMAL PROTEIN S18"/>
    <property type="match status" value="1"/>
</dbReference>
<dbReference type="PANTHER" id="PTHR10871:SF1">
    <property type="entry name" value="SMALL RIBOSOMAL SUBUNIT PROTEIN US13M"/>
    <property type="match status" value="1"/>
</dbReference>
<dbReference type="Pfam" id="PF00416">
    <property type="entry name" value="Ribosomal_S13"/>
    <property type="match status" value="1"/>
</dbReference>
<dbReference type="PIRSF" id="PIRSF002134">
    <property type="entry name" value="Ribosomal_S13"/>
    <property type="match status" value="1"/>
</dbReference>
<dbReference type="SUPFAM" id="SSF46946">
    <property type="entry name" value="S13-like H2TH domain"/>
    <property type="match status" value="1"/>
</dbReference>
<dbReference type="PROSITE" id="PS50159">
    <property type="entry name" value="RIBOSOMAL_S13_2"/>
    <property type="match status" value="1"/>
</dbReference>
<proteinExistence type="inferred from homology"/>
<accession>B3EP37</accession>
<protein>
    <recommendedName>
        <fullName evidence="1">Small ribosomal subunit protein uS13</fullName>
    </recommendedName>
    <alternativeName>
        <fullName evidence="3">30S ribosomal protein S13</fullName>
    </alternativeName>
</protein>
<name>RS13_CHLPB</name>
<keyword id="KW-0687">Ribonucleoprotein</keyword>
<keyword id="KW-0689">Ribosomal protein</keyword>
<keyword id="KW-0694">RNA-binding</keyword>
<keyword id="KW-0699">rRNA-binding</keyword>
<keyword id="KW-0820">tRNA-binding</keyword>
<organism>
    <name type="scientific">Chlorobium phaeobacteroides (strain BS1)</name>
    <dbReference type="NCBI Taxonomy" id="331678"/>
    <lineage>
        <taxon>Bacteria</taxon>
        <taxon>Pseudomonadati</taxon>
        <taxon>Chlorobiota</taxon>
        <taxon>Chlorobiia</taxon>
        <taxon>Chlorobiales</taxon>
        <taxon>Chlorobiaceae</taxon>
        <taxon>Chlorobium/Pelodictyon group</taxon>
        <taxon>Chlorobium</taxon>
    </lineage>
</organism>